<gene>
    <name evidence="1" type="primary">plsY</name>
    <name type="ordered locus">YPTB3414</name>
</gene>
<dbReference type="EC" id="2.3.1.275" evidence="1"/>
<dbReference type="EMBL" id="BX936398">
    <property type="protein sequence ID" value="CAH22652.1"/>
    <property type="molecule type" value="Genomic_DNA"/>
</dbReference>
<dbReference type="RefSeq" id="WP_002217581.1">
    <property type="nucleotide sequence ID" value="NZ_CP009712.1"/>
</dbReference>
<dbReference type="SMR" id="Q665U6"/>
<dbReference type="GeneID" id="57973977"/>
<dbReference type="KEGG" id="ypo:BZ17_3194"/>
<dbReference type="KEGG" id="yps:YPTB3414"/>
<dbReference type="PATRIC" id="fig|273123.14.peg.3345"/>
<dbReference type="UniPathway" id="UPA00085"/>
<dbReference type="Proteomes" id="UP000001011">
    <property type="component" value="Chromosome"/>
</dbReference>
<dbReference type="GO" id="GO:0005886">
    <property type="term" value="C:plasma membrane"/>
    <property type="evidence" value="ECO:0007669"/>
    <property type="project" value="UniProtKB-SubCell"/>
</dbReference>
<dbReference type="GO" id="GO:0043772">
    <property type="term" value="F:acyl-phosphate glycerol-3-phosphate acyltransferase activity"/>
    <property type="evidence" value="ECO:0007669"/>
    <property type="project" value="UniProtKB-UniRule"/>
</dbReference>
<dbReference type="GO" id="GO:0008654">
    <property type="term" value="P:phospholipid biosynthetic process"/>
    <property type="evidence" value="ECO:0007669"/>
    <property type="project" value="UniProtKB-UniRule"/>
</dbReference>
<dbReference type="HAMAP" id="MF_01043">
    <property type="entry name" value="PlsY"/>
    <property type="match status" value="1"/>
</dbReference>
<dbReference type="InterPro" id="IPR003811">
    <property type="entry name" value="G3P_acylTferase_PlsY"/>
</dbReference>
<dbReference type="NCBIfam" id="TIGR00023">
    <property type="entry name" value="glycerol-3-phosphate 1-O-acyltransferase PlsY"/>
    <property type="match status" value="1"/>
</dbReference>
<dbReference type="PANTHER" id="PTHR30309:SF0">
    <property type="entry name" value="GLYCEROL-3-PHOSPHATE ACYLTRANSFERASE-RELATED"/>
    <property type="match status" value="1"/>
</dbReference>
<dbReference type="PANTHER" id="PTHR30309">
    <property type="entry name" value="INNER MEMBRANE PROTEIN YGIH"/>
    <property type="match status" value="1"/>
</dbReference>
<dbReference type="Pfam" id="PF02660">
    <property type="entry name" value="G3P_acyltransf"/>
    <property type="match status" value="1"/>
</dbReference>
<dbReference type="SMART" id="SM01207">
    <property type="entry name" value="G3P_acyltransf"/>
    <property type="match status" value="1"/>
</dbReference>
<name>PLSY_YERPS</name>
<evidence type="ECO:0000255" key="1">
    <source>
        <dbReference type="HAMAP-Rule" id="MF_01043"/>
    </source>
</evidence>
<feature type="chain" id="PRO_0000188494" description="Glycerol-3-phosphate acyltransferase">
    <location>
        <begin position="1"/>
        <end position="216"/>
    </location>
</feature>
<feature type="transmembrane region" description="Helical" evidence="1">
    <location>
        <begin position="4"/>
        <end position="24"/>
    </location>
</feature>
<feature type="transmembrane region" description="Helical" evidence="1">
    <location>
        <begin position="56"/>
        <end position="76"/>
    </location>
</feature>
<feature type="transmembrane region" description="Helical" evidence="1">
    <location>
        <begin position="80"/>
        <end position="100"/>
    </location>
</feature>
<feature type="transmembrane region" description="Helical" evidence="1">
    <location>
        <begin position="112"/>
        <end position="132"/>
    </location>
</feature>
<feature type="transmembrane region" description="Helical" evidence="1">
    <location>
        <begin position="138"/>
        <end position="158"/>
    </location>
</feature>
<organism>
    <name type="scientific">Yersinia pseudotuberculosis serotype I (strain IP32953)</name>
    <dbReference type="NCBI Taxonomy" id="273123"/>
    <lineage>
        <taxon>Bacteria</taxon>
        <taxon>Pseudomonadati</taxon>
        <taxon>Pseudomonadota</taxon>
        <taxon>Gammaproteobacteria</taxon>
        <taxon>Enterobacterales</taxon>
        <taxon>Yersiniaceae</taxon>
        <taxon>Yersinia</taxon>
    </lineage>
</organism>
<proteinExistence type="inferred from homology"/>
<keyword id="KW-0997">Cell inner membrane</keyword>
<keyword id="KW-1003">Cell membrane</keyword>
<keyword id="KW-0444">Lipid biosynthesis</keyword>
<keyword id="KW-0443">Lipid metabolism</keyword>
<keyword id="KW-0472">Membrane</keyword>
<keyword id="KW-0594">Phospholipid biosynthesis</keyword>
<keyword id="KW-1208">Phospholipid metabolism</keyword>
<keyword id="KW-0808">Transferase</keyword>
<keyword id="KW-0812">Transmembrane</keyword>
<keyword id="KW-1133">Transmembrane helix</keyword>
<sequence>MSAIALGMIIFAYLCGSISSAILVCRVARLPDPRTHGSGNPGATNVLRIGGRTAAVAVLLFDILKGMLPVWIAYLLHIPPLYLGLTAIAACLGHIYPVFFHFKGGKGVATAFGAIAPIGWDLTGLMTGTWLLTVLLSGYSSLGAIVSALIAPFYVWWFKPQFTFPVAMLSCLILMRHHDNIQRLWRGKEGKIWDKLRKKKQKTPAEEAAELEEKED</sequence>
<protein>
    <recommendedName>
        <fullName evidence="1">Glycerol-3-phosphate acyltransferase</fullName>
    </recommendedName>
    <alternativeName>
        <fullName evidence="1">Acyl-PO4 G3P acyltransferase</fullName>
    </alternativeName>
    <alternativeName>
        <fullName evidence="1">Acyl-phosphate--glycerol-3-phosphate acyltransferase</fullName>
    </alternativeName>
    <alternativeName>
        <fullName evidence="1">G3P acyltransferase</fullName>
        <shortName evidence="1">GPAT</shortName>
        <ecNumber evidence="1">2.3.1.275</ecNumber>
    </alternativeName>
    <alternativeName>
        <fullName evidence="1">Lysophosphatidic acid synthase</fullName>
        <shortName evidence="1">LPA synthase</shortName>
    </alternativeName>
</protein>
<comment type="function">
    <text evidence="1">Catalyzes the transfer of an acyl group from acyl-phosphate (acyl-PO(4)) to glycerol-3-phosphate (G3P) to form lysophosphatidic acid (LPA). This enzyme utilizes acyl-phosphate as fatty acyl donor, but not acyl-CoA or acyl-ACP.</text>
</comment>
<comment type="catalytic activity">
    <reaction evidence="1">
        <text>an acyl phosphate + sn-glycerol 3-phosphate = a 1-acyl-sn-glycero-3-phosphate + phosphate</text>
        <dbReference type="Rhea" id="RHEA:34075"/>
        <dbReference type="ChEBI" id="CHEBI:43474"/>
        <dbReference type="ChEBI" id="CHEBI:57597"/>
        <dbReference type="ChEBI" id="CHEBI:57970"/>
        <dbReference type="ChEBI" id="CHEBI:59918"/>
        <dbReference type="EC" id="2.3.1.275"/>
    </reaction>
</comment>
<comment type="pathway">
    <text evidence="1">Lipid metabolism; phospholipid metabolism.</text>
</comment>
<comment type="subunit">
    <text evidence="1">Probably interacts with PlsX.</text>
</comment>
<comment type="subcellular location">
    <subcellularLocation>
        <location evidence="1">Cell inner membrane</location>
        <topology evidence="1">Multi-pass membrane protein</topology>
    </subcellularLocation>
</comment>
<comment type="similarity">
    <text evidence="1">Belongs to the PlsY family.</text>
</comment>
<accession>Q665U6</accession>
<reference key="1">
    <citation type="journal article" date="2004" name="Proc. Natl. Acad. Sci. U.S.A.">
        <title>Insights into the evolution of Yersinia pestis through whole-genome comparison with Yersinia pseudotuberculosis.</title>
        <authorList>
            <person name="Chain P.S.G."/>
            <person name="Carniel E."/>
            <person name="Larimer F.W."/>
            <person name="Lamerdin J."/>
            <person name="Stoutland P.O."/>
            <person name="Regala W.M."/>
            <person name="Georgescu A.M."/>
            <person name="Vergez L.M."/>
            <person name="Land M.L."/>
            <person name="Motin V.L."/>
            <person name="Brubaker R.R."/>
            <person name="Fowler J."/>
            <person name="Hinnebusch J."/>
            <person name="Marceau M."/>
            <person name="Medigue C."/>
            <person name="Simonet M."/>
            <person name="Chenal-Francisque V."/>
            <person name="Souza B."/>
            <person name="Dacheux D."/>
            <person name="Elliott J.M."/>
            <person name="Derbise A."/>
            <person name="Hauser L.J."/>
            <person name="Garcia E."/>
        </authorList>
    </citation>
    <scope>NUCLEOTIDE SEQUENCE [LARGE SCALE GENOMIC DNA]</scope>
    <source>
        <strain>IP32953</strain>
    </source>
</reference>